<organism>
    <name type="scientific">Drosophila simulans</name>
    <name type="common">Fruit fly</name>
    <dbReference type="NCBI Taxonomy" id="7240"/>
    <lineage>
        <taxon>Eukaryota</taxon>
        <taxon>Metazoa</taxon>
        <taxon>Ecdysozoa</taxon>
        <taxon>Arthropoda</taxon>
        <taxon>Hexapoda</taxon>
        <taxon>Insecta</taxon>
        <taxon>Pterygota</taxon>
        <taxon>Neoptera</taxon>
        <taxon>Endopterygota</taxon>
        <taxon>Diptera</taxon>
        <taxon>Brachycera</taxon>
        <taxon>Muscomorpha</taxon>
        <taxon>Ephydroidea</taxon>
        <taxon>Drosophilidae</taxon>
        <taxon>Drosophila</taxon>
        <taxon>Sophophora</taxon>
    </lineage>
</organism>
<evidence type="ECO:0000250" key="1">
    <source>
        <dbReference type="UniProtKB" id="P00396"/>
    </source>
</evidence>
<evidence type="ECO:0000250" key="2">
    <source>
        <dbReference type="UniProtKB" id="P00401"/>
    </source>
</evidence>
<evidence type="ECO:0000255" key="3"/>
<evidence type="ECO:0000269" key="4">
    <source>
    </source>
</evidence>
<evidence type="ECO:0000269" key="5">
    <source>
    </source>
</evidence>
<evidence type="ECO:0000305" key="6"/>
<comment type="function">
    <text evidence="2">Component of the cytochrome c oxidase, the last enzyme in the mitochondrial electron transport chain which drives oxidative phosphorylation. The respiratory chain contains 3 multisubunit complexes succinate dehydrogenase (complex II, CII), ubiquinol-cytochrome c oxidoreductase (cytochrome b-c1 complex, complex III, CIII) and cytochrome c oxidase (complex IV, CIV), that cooperate to transfer electrons derived from NADH and succinate to molecular oxygen, creating an electrochemical gradient over the inner membrane that drives transmembrane transport and the ATP synthase. Cytochrome c oxidase is the component of the respiratory chain that catalyzes the reduction of oxygen to water. Electrons originating from reduced cytochrome c in the intermembrane space (IMS) are transferred via the dinuclear copper A center (CU(A)) of subunit 2 and heme A of subunit 1 to the active site in subunit 1, a binuclear center (BNC) formed by heme A3 and copper B (CU(B)). The BNC reduces molecular oxygen to 2 water molecules using 4 electrons from cytochrome c in the IMS and 4 protons from the mitochondrial matrix.</text>
</comment>
<comment type="catalytic activity">
    <reaction evidence="2">
        <text>4 Fe(II)-[cytochrome c] + O2 + 8 H(+)(in) = 4 Fe(III)-[cytochrome c] + 2 H2O + 4 H(+)(out)</text>
        <dbReference type="Rhea" id="RHEA:11436"/>
        <dbReference type="Rhea" id="RHEA-COMP:10350"/>
        <dbReference type="Rhea" id="RHEA-COMP:14399"/>
        <dbReference type="ChEBI" id="CHEBI:15377"/>
        <dbReference type="ChEBI" id="CHEBI:15378"/>
        <dbReference type="ChEBI" id="CHEBI:15379"/>
        <dbReference type="ChEBI" id="CHEBI:29033"/>
        <dbReference type="ChEBI" id="CHEBI:29034"/>
        <dbReference type="EC" id="7.1.1.9"/>
    </reaction>
    <physiologicalReaction direction="left-to-right" evidence="2">
        <dbReference type="Rhea" id="RHEA:11437"/>
    </physiologicalReaction>
</comment>
<comment type="cofactor">
    <cofactor evidence="2">
        <name>heme</name>
        <dbReference type="ChEBI" id="CHEBI:30413"/>
    </cofactor>
    <text evidence="2">Binds 2 heme A groups non-covalently per subunit.</text>
</comment>
<comment type="cofactor">
    <cofactor evidence="2">
        <name>Cu cation</name>
        <dbReference type="ChEBI" id="CHEBI:23378"/>
    </cofactor>
    <text evidence="2">Binds a copper B center.</text>
</comment>
<comment type="pathway">
    <text evidence="2">Energy metabolism; oxidative phosphorylation.</text>
</comment>
<comment type="subunit">
    <text evidence="2">Component of the cytochrome c oxidase (complex IV, CIV), a multisubunit enzyme composed of a catalytic core of 3 subunits and several supernumerary subunits. The complex exists as a monomer or a dimer and forms supercomplexes (SCs) in the inner mitochondrial membrane with ubiquinol-cytochrome c oxidoreductase (cytochrome b-c1 complex, complex III, CIII).</text>
</comment>
<comment type="subcellular location">
    <subcellularLocation>
        <location evidence="2">Mitochondrion inner membrane</location>
        <topology evidence="2">Multi-pass membrane protein</topology>
    </subcellularLocation>
</comment>
<comment type="similarity">
    <text evidence="6">Belongs to the heme-copper respiratory oxidase family.</text>
</comment>
<comment type="caution">
    <text evidence="6">There is no mitochondrial-type translation initiation codon present in frame in the sequence. In PubMed:19533212, the authors suggest the presence of a novel start codon coding for either Pro or Ser in Drosophila CoI transcripts.</text>
</comment>
<feature type="chain" id="PRO_0000183328" description="Cytochrome c oxidase subunit 1">
    <location>
        <begin position="1"/>
        <end position="511"/>
    </location>
</feature>
<feature type="transmembrane region" description="Helical" evidence="3">
    <location>
        <begin position="15"/>
        <end position="35"/>
    </location>
</feature>
<feature type="transmembrane region" description="Helical" evidence="3">
    <location>
        <begin position="54"/>
        <end position="74"/>
    </location>
</feature>
<feature type="transmembrane region" description="Helical" evidence="3">
    <location>
        <begin position="100"/>
        <end position="120"/>
    </location>
</feature>
<feature type="transmembrane region" description="Helical" evidence="3">
    <location>
        <begin position="143"/>
        <end position="163"/>
    </location>
</feature>
<feature type="transmembrane region" description="Helical" evidence="3">
    <location>
        <begin position="181"/>
        <end position="201"/>
    </location>
</feature>
<feature type="transmembrane region" description="Helical" evidence="3">
    <location>
        <begin position="232"/>
        <end position="252"/>
    </location>
</feature>
<feature type="transmembrane region" description="Helical" evidence="3">
    <location>
        <begin position="266"/>
        <end position="286"/>
    </location>
</feature>
<feature type="transmembrane region" description="Helical" evidence="3">
    <location>
        <begin position="303"/>
        <end position="323"/>
    </location>
</feature>
<feature type="transmembrane region" description="Helical" evidence="3">
    <location>
        <begin position="336"/>
        <end position="356"/>
    </location>
</feature>
<feature type="transmembrane region" description="Helical" evidence="3">
    <location>
        <begin position="378"/>
        <end position="398"/>
    </location>
</feature>
<feature type="transmembrane region" description="Helical" evidence="3">
    <location>
        <begin position="412"/>
        <end position="432"/>
    </location>
</feature>
<feature type="transmembrane region" description="Helical" evidence="3">
    <location>
        <begin position="450"/>
        <end position="470"/>
    </location>
</feature>
<feature type="binding site" evidence="2">
    <location>
        <position position="38"/>
    </location>
    <ligand>
        <name>Ca(2+)</name>
        <dbReference type="ChEBI" id="CHEBI:29108"/>
    </ligand>
</feature>
<feature type="binding site" evidence="2">
    <location>
        <position position="43"/>
    </location>
    <ligand>
        <name>Ca(2+)</name>
        <dbReference type="ChEBI" id="CHEBI:29108"/>
    </ligand>
</feature>
<feature type="binding site" description="axial binding residue" evidence="2">
    <location>
        <position position="59"/>
    </location>
    <ligand>
        <name>Fe(II)-heme a</name>
        <dbReference type="ChEBI" id="CHEBI:61715"/>
        <note>low-spin</note>
    </ligand>
    <ligandPart>
        <name>Fe</name>
        <dbReference type="ChEBI" id="CHEBI:18248"/>
    </ligandPart>
</feature>
<feature type="binding site" evidence="2">
    <location>
        <position position="238"/>
    </location>
    <ligand>
        <name>Cu cation</name>
        <dbReference type="ChEBI" id="CHEBI:23378"/>
        <label>B</label>
    </ligand>
</feature>
<feature type="binding site" evidence="1">
    <location>
        <position position="242"/>
    </location>
    <ligand>
        <name>O2</name>
        <dbReference type="ChEBI" id="CHEBI:15379"/>
    </ligand>
</feature>
<feature type="binding site" evidence="2">
    <location>
        <position position="288"/>
    </location>
    <ligand>
        <name>Cu cation</name>
        <dbReference type="ChEBI" id="CHEBI:23378"/>
        <label>B</label>
    </ligand>
</feature>
<feature type="binding site" evidence="2">
    <location>
        <position position="289"/>
    </location>
    <ligand>
        <name>Cu cation</name>
        <dbReference type="ChEBI" id="CHEBI:23378"/>
        <label>B</label>
    </ligand>
</feature>
<feature type="binding site" evidence="2">
    <location>
        <position position="366"/>
    </location>
    <ligand>
        <name>Mg(2+)</name>
        <dbReference type="ChEBI" id="CHEBI:18420"/>
        <note>ligand shared with subunit 2</note>
    </ligand>
</feature>
<feature type="binding site" evidence="2">
    <location>
        <position position="367"/>
    </location>
    <ligand>
        <name>Mg(2+)</name>
        <dbReference type="ChEBI" id="CHEBI:18420"/>
        <note>ligand shared with subunit 2</note>
    </ligand>
</feature>
<feature type="binding site" description="axial binding residue" evidence="2">
    <location>
        <position position="374"/>
    </location>
    <ligand>
        <name>heme a3</name>
        <dbReference type="ChEBI" id="CHEBI:83282"/>
        <note>high-spin</note>
    </ligand>
    <ligandPart>
        <name>Fe</name>
        <dbReference type="ChEBI" id="CHEBI:18248"/>
    </ligandPart>
</feature>
<feature type="binding site" description="axial binding residue" evidence="2">
    <location>
        <position position="376"/>
    </location>
    <ligand>
        <name>Fe(II)-heme a</name>
        <dbReference type="ChEBI" id="CHEBI:61715"/>
        <note>low-spin</note>
    </ligand>
    <ligandPart>
        <name>Fe</name>
        <dbReference type="ChEBI" id="CHEBI:18248"/>
    </ligandPart>
</feature>
<feature type="cross-link" description="1'-histidyl-3'-tyrosine (His-Tyr)" evidence="2">
    <location>
        <begin position="238"/>
        <end position="242"/>
    </location>
</feature>
<feature type="sequence variant" description="In strain: Hawaii, New Caledonia and Tahiti." evidence="4 5">
    <original>V</original>
    <variation>I</variation>
    <location>
        <position position="450"/>
    </location>
</feature>
<feature type="sequence variant" description="In strain: Hawaii, New Caledonia and Tahiti." evidence="4 5">
    <original>Y</original>
    <variation>F</variation>
    <location>
        <position position="468"/>
    </location>
</feature>
<feature type="sequence conflict" description="In Ref. 1; AAF77453/AAF77427/AAF77413 and 3; AFC97648." evidence="6" ref="1 3">
    <original>V</original>
    <variation>I</variation>
    <location>
        <position position="27"/>
    </location>
</feature>
<name>COX1_DROSI</name>
<keyword id="KW-0106">Calcium</keyword>
<keyword id="KW-0186">Copper</keyword>
<keyword id="KW-0249">Electron transport</keyword>
<keyword id="KW-0349">Heme</keyword>
<keyword id="KW-0408">Iron</keyword>
<keyword id="KW-0460">Magnesium</keyword>
<keyword id="KW-0472">Membrane</keyword>
<keyword id="KW-0479">Metal-binding</keyword>
<keyword id="KW-0496">Mitochondrion</keyword>
<keyword id="KW-0999">Mitochondrion inner membrane</keyword>
<keyword id="KW-1185">Reference proteome</keyword>
<keyword id="KW-0679">Respiratory chain</keyword>
<keyword id="KW-1278">Translocase</keyword>
<keyword id="KW-0812">Transmembrane</keyword>
<keyword id="KW-1133">Transmembrane helix</keyword>
<keyword id="KW-0813">Transport</keyword>
<sequence>PRQWLFSTNHKDIGTLYFIFGAWAGMVGTSLSILIRAELGHPGALIGDDQIYNVIVTAHAFIMIFFMVMPIMIGGFGNWLVPLMLGAPDMAFPRMNNMSFWLLPPALSLLLVSSMVENGAGTGWTVYPPLSAGIAHGGASVDLAIFSLHLAGISSILGAVNFITTVINMRSTGISLDRMPLFVWSVVITALLLLLSLPVLAGAITMLLTDRNLNTSFFDPAGGGDPILYQHLFWFFGHPEVYILILPGFGMISHIISQESGKKETFGSLGMIYAMLAIGLLGFIVWAHHMFTVGMDVDTRAYFTSATMIIAVPTGIKIFSWLATLHGTQLSYSPAILWALGFVFLFTVGGLTGVVLANSSVDIILHDTYYVVAHFHYVLSMGAVFAIMAGFIHWYPLFTGLTLNNKWLKSQFIIMFIGVNLTFFPQHFLGLAGMPRRYSDYPDAYTTWNVVSTIGSTISLLGILFFFYIIWESLVSQRQVIYPIQLNSSIEWYQNTPPAEHSYSELPLLTN</sequence>
<gene>
    <name type="primary">mt:CoI</name>
    <name type="synonym">CoI</name>
</gene>
<proteinExistence type="evidence at transcript level"/>
<geneLocation type="mitochondrion"/>
<protein>
    <recommendedName>
        <fullName>Cytochrome c oxidase subunit 1</fullName>
        <ecNumber>7.1.1.9</ecNumber>
    </recommendedName>
    <alternativeName>
        <fullName>Cytochrome c oxidase polypeptide I</fullName>
    </alternativeName>
</protein>
<accession>Q34388</accession>
<accession>H9EAT7</accession>
<accession>H9EAV0</accession>
<accession>Q34390</accession>
<accession>Q34393</accession>
<accession>Q36710</accession>
<accession>Q9MD75</accession>
<accession>Q9MDV2</accession>
<accession>Q9ME63</accession>
<reference key="1">
    <citation type="journal article" date="2000" name="J. Mol. Evol.">
        <title>Comparative genomics of mitochondrial DNA in Drosophila simulans.</title>
        <authorList>
            <person name="Ballard J.W."/>
        </authorList>
    </citation>
    <scope>NUCLEOTIDE SEQUENCE [LARGE SCALE GENOMIC DNA]</scope>
    <scope>VARIANTS ILE-450 AND PHE-468</scope>
    <source>
        <strain>C167</strain>
        <strain>DSR</strain>
        <strain>DSW</strain>
        <strain>HW00</strain>
        <strain>HW09</strain>
        <strain>MD106</strain>
        <strain>MD111</strain>
        <strain>MD112</strain>
        <strain>MD119</strain>
        <strain>MD221</strain>
        <strain>MD225</strain>
        <strain>MDW86</strain>
        <strain>NC37</strain>
        <strain>NC48</strain>
        <strain>RU00</strain>
        <strain>RU01</strain>
        <strain>RU07</strain>
        <strain>RU259</strain>
        <strain>RU35</strain>
        <strain>SC00</strain>
        <strain>TT00</strain>
        <strain>TT01</strain>
    </source>
</reference>
<reference key="2">
    <citation type="journal article" date="2004" name="Mol. Biol. Evol.">
        <title>Sequential evolution of a symbiont inferred from the host: Wolbachia and Drosophila simulans.</title>
        <authorList>
            <person name="Ballard J.W.O."/>
        </authorList>
    </citation>
    <scope>NUCLEOTIDE SEQUENCE [GENOMIC DNA]</scope>
    <source>
        <strain>Australia</strain>
        <strain>Kenya</strain>
    </source>
</reference>
<reference key="3">
    <citation type="journal article" date="2013" name="Heredity">
        <title>Paternal transmission of mitochondrial DNA as an integral part of mitochondrial inheritance in metapopulations of Drosophila simulans.</title>
        <authorList>
            <person name="Wolff J.N."/>
            <person name="Nafisinia M."/>
            <person name="Sutovsky P."/>
            <person name="Ballard J.W."/>
        </authorList>
    </citation>
    <scope>NUCLEOTIDE SEQUENCE [GENOMIC DNA]</scope>
    <source>
        <strain>Kenya</strain>
    </source>
</reference>
<reference key="4">
    <citation type="journal article" date="1990" name="Proc. Natl. Acad. Sci. U.S.A.">
        <title>Evolution of Drosophila mitochondrial DNA and the history of the melanogaster subgroup.</title>
        <authorList>
            <person name="Satta Y."/>
            <person name="Takahata N."/>
        </authorList>
    </citation>
    <scope>NUCLEOTIDE SEQUENCE [GENOMIC DNA] OF 1-498</scope>
    <scope>VARIANTS ILE-450 AND PHE-468</scope>
    <source>
        <strain>Hawaii</strain>
        <strain>Sl3</strain>
    </source>
</reference>
<reference key="5">
    <citation type="journal article" date="1987" name="Mol. Biol. Evol.">
        <title>Analysis of nucleotide substitutions of mitochondrial DNAs in Drosophila melanogaster and its sibling species.</title>
        <authorList>
            <person name="Satta Y."/>
            <person name="Ishiwa H."/>
            <person name="Chigusa S.I."/>
        </authorList>
    </citation>
    <scope>NUCLEOTIDE SEQUENCE [GENOMIC DNA] OF 1-101</scope>
    <source>
        <strain>Nairobi</strain>
    </source>
</reference>
<reference key="6">
    <citation type="journal article" date="2009" name="J. Mol. Evol.">
        <title>Comparative genomics of Drosophila mtDNA: Novel features of conservation and change across functional domains and lineages.</title>
        <authorList>
            <person name="Montooth K.L."/>
            <person name="Abt D.N."/>
            <person name="Hofmann J.W."/>
            <person name="Rand D.M."/>
        </authorList>
    </citation>
    <scope>NUCLEOTIDE SEQUENCE [MRNA] OF 1-10</scope>
    <scope>IDENTIFICATION OF PROBABLE INITIATION SITE</scope>
</reference>
<reference key="7">
    <citation type="journal article" date="1993" name="Genet. Res.">
        <title>Evolution of the mitochondrial ATPase 6 gene in Drosophila: unusually high level of polymorphism in D. melanogaster.</title>
        <authorList>
            <person name="Kaneko M."/>
            <person name="Satta Y."/>
            <person name="Matsuura E.T."/>
            <person name="Chigusa S.I."/>
        </authorList>
    </citation>
    <scope>NUCLEOTIDE SEQUENCE [GENOMIC DNA] OF 500-510</scope>
</reference>
<dbReference type="EC" id="7.1.1.9"/>
<dbReference type="EMBL" id="AF200833">
    <property type="protein sequence ID" value="AAF77296.1"/>
    <property type="molecule type" value="Genomic_DNA"/>
</dbReference>
<dbReference type="EMBL" id="AF200834">
    <property type="protein sequence ID" value="AAF77310.1"/>
    <property type="molecule type" value="Genomic_DNA"/>
</dbReference>
<dbReference type="EMBL" id="AF200835">
    <property type="protein sequence ID" value="AAF77324.1"/>
    <property type="molecule type" value="Genomic_DNA"/>
</dbReference>
<dbReference type="EMBL" id="AF200836">
    <property type="protein sequence ID" value="AAF77336.1"/>
    <property type="molecule type" value="Genomic_DNA"/>
</dbReference>
<dbReference type="EMBL" id="AF200837">
    <property type="protein sequence ID" value="AAF77349.1"/>
    <property type="molecule type" value="Genomic_DNA"/>
</dbReference>
<dbReference type="EMBL" id="AF200838">
    <property type="protein sequence ID" value="AAF77368.1"/>
    <property type="molecule type" value="Genomic_DNA"/>
</dbReference>
<dbReference type="EMBL" id="AF200839">
    <property type="protein sequence ID" value="AAF77376.1"/>
    <property type="molecule type" value="Genomic_DNA"/>
</dbReference>
<dbReference type="EMBL" id="AF200840">
    <property type="protein sequence ID" value="AAF77393.1"/>
    <property type="molecule type" value="Genomic_DNA"/>
</dbReference>
<dbReference type="EMBL" id="AF200841">
    <property type="protein sequence ID" value="AAF77401.1"/>
    <property type="molecule type" value="Genomic_DNA"/>
</dbReference>
<dbReference type="EMBL" id="AF200842">
    <property type="protein sequence ID" value="AAF77413.1"/>
    <property type="molecule type" value="Genomic_DNA"/>
</dbReference>
<dbReference type="EMBL" id="AF200843">
    <property type="protein sequence ID" value="AAF77427.1"/>
    <property type="molecule type" value="Genomic_DNA"/>
</dbReference>
<dbReference type="EMBL" id="AF200844">
    <property type="protein sequence ID" value="AAF77440.1"/>
    <property type="molecule type" value="Genomic_DNA"/>
</dbReference>
<dbReference type="EMBL" id="AF200845">
    <property type="protein sequence ID" value="AAF77453.1"/>
    <property type="molecule type" value="Genomic_DNA"/>
</dbReference>
<dbReference type="EMBL" id="AF200846">
    <property type="protein sequence ID" value="AAF77466.1"/>
    <property type="molecule type" value="Genomic_DNA"/>
</dbReference>
<dbReference type="EMBL" id="AF200847">
    <property type="protein sequence ID" value="AAF77478.1"/>
    <property type="molecule type" value="Genomic_DNA"/>
</dbReference>
<dbReference type="EMBL" id="AF200848">
    <property type="protein sequence ID" value="AAF77492.1"/>
    <property type="molecule type" value="Genomic_DNA"/>
</dbReference>
<dbReference type="EMBL" id="AF200849">
    <property type="protein sequence ID" value="AAF77506.1"/>
    <property type="molecule type" value="Genomic_DNA"/>
</dbReference>
<dbReference type="EMBL" id="AF200850">
    <property type="protein sequence ID" value="AAF77518.1"/>
    <property type="molecule type" value="Genomic_DNA"/>
</dbReference>
<dbReference type="EMBL" id="AF200851">
    <property type="protein sequence ID" value="AAF77532.1"/>
    <property type="molecule type" value="Genomic_DNA"/>
</dbReference>
<dbReference type="EMBL" id="AF200852">
    <property type="protein sequence ID" value="AAF77544.1"/>
    <property type="molecule type" value="Genomic_DNA"/>
</dbReference>
<dbReference type="EMBL" id="AF200853">
    <property type="protein sequence ID" value="AAF77557.1"/>
    <property type="molecule type" value="Genomic_DNA"/>
</dbReference>
<dbReference type="EMBL" id="AF200854">
    <property type="protein sequence ID" value="AAF77570.1"/>
    <property type="molecule type" value="Genomic_DNA"/>
</dbReference>
<dbReference type="EMBL" id="AY518670">
    <property type="protein sequence ID" value="AAR91400.1"/>
    <property type="molecule type" value="Genomic_DNA"/>
</dbReference>
<dbReference type="EMBL" id="AY518671">
    <property type="protein sequence ID" value="AAR91402.1"/>
    <property type="molecule type" value="Genomic_DNA"/>
</dbReference>
<dbReference type="EMBL" id="AY518672">
    <property type="protein sequence ID" value="AAR91415.1"/>
    <property type="molecule type" value="Genomic_DNA"/>
</dbReference>
<dbReference type="EMBL" id="AY518673">
    <property type="protein sequence ID" value="AAR91428.1"/>
    <property type="molecule type" value="Genomic_DNA"/>
</dbReference>
<dbReference type="EMBL" id="AY518674">
    <property type="protein sequence ID" value="AAR91441.1"/>
    <property type="molecule type" value="Genomic_DNA"/>
</dbReference>
<dbReference type="EMBL" id="JQ691660">
    <property type="protein sequence ID" value="AFC97648.1"/>
    <property type="molecule type" value="Genomic_DNA"/>
</dbReference>
<dbReference type="EMBL" id="JQ691661">
    <property type="protein sequence ID" value="AFC97661.1"/>
    <property type="molecule type" value="Genomic_DNA"/>
</dbReference>
<dbReference type="EMBL" id="M57909">
    <property type="protein sequence ID" value="AAB02284.1"/>
    <property type="molecule type" value="Genomic_DNA"/>
</dbReference>
<dbReference type="EMBL" id="M57911">
    <property type="protein sequence ID" value="AAA66247.2"/>
    <property type="molecule type" value="Genomic_DNA"/>
</dbReference>
<dbReference type="EMBL" id="M18072">
    <property type="protein sequence ID" value="AAA65482.2"/>
    <property type="molecule type" value="Genomic_DNA"/>
</dbReference>
<dbReference type="EMBL" id="S64977">
    <property type="protein sequence ID" value="AAD13955.1"/>
    <property type="molecule type" value="Genomic_DNA"/>
</dbReference>
<dbReference type="SMR" id="Q34388"/>
<dbReference type="STRING" id="7240.Q34388"/>
<dbReference type="KEGG" id="dsi:COX1"/>
<dbReference type="CTD" id="4512"/>
<dbReference type="UniPathway" id="UPA00705"/>
<dbReference type="ChiTaRS" id="COX1">
    <property type="organism name" value="fly"/>
</dbReference>
<dbReference type="Proteomes" id="UP000000304">
    <property type="component" value="Mitochondrion"/>
</dbReference>
<dbReference type="GO" id="GO:0005743">
    <property type="term" value="C:mitochondrial inner membrane"/>
    <property type="evidence" value="ECO:0007669"/>
    <property type="project" value="UniProtKB-SubCell"/>
</dbReference>
<dbReference type="GO" id="GO:0045277">
    <property type="term" value="C:respiratory chain complex IV"/>
    <property type="evidence" value="ECO:0007669"/>
    <property type="project" value="InterPro"/>
</dbReference>
<dbReference type="GO" id="GO:0004129">
    <property type="term" value="F:cytochrome-c oxidase activity"/>
    <property type="evidence" value="ECO:0007669"/>
    <property type="project" value="UniProtKB-EC"/>
</dbReference>
<dbReference type="GO" id="GO:0020037">
    <property type="term" value="F:heme binding"/>
    <property type="evidence" value="ECO:0007669"/>
    <property type="project" value="InterPro"/>
</dbReference>
<dbReference type="GO" id="GO:0046872">
    <property type="term" value="F:metal ion binding"/>
    <property type="evidence" value="ECO:0007669"/>
    <property type="project" value="UniProtKB-KW"/>
</dbReference>
<dbReference type="GO" id="GO:0015990">
    <property type="term" value="P:electron transport coupled proton transport"/>
    <property type="evidence" value="ECO:0007669"/>
    <property type="project" value="TreeGrafter"/>
</dbReference>
<dbReference type="GO" id="GO:0006123">
    <property type="term" value="P:mitochondrial electron transport, cytochrome c to oxygen"/>
    <property type="evidence" value="ECO:0007669"/>
    <property type="project" value="TreeGrafter"/>
</dbReference>
<dbReference type="CDD" id="cd01663">
    <property type="entry name" value="Cyt_c_Oxidase_I"/>
    <property type="match status" value="1"/>
</dbReference>
<dbReference type="FunFam" id="1.20.210.10:FF:000001">
    <property type="entry name" value="Cytochrome c oxidase subunit 1"/>
    <property type="match status" value="1"/>
</dbReference>
<dbReference type="Gene3D" id="1.20.210.10">
    <property type="entry name" value="Cytochrome c oxidase-like, subunit I domain"/>
    <property type="match status" value="1"/>
</dbReference>
<dbReference type="InterPro" id="IPR023616">
    <property type="entry name" value="Cyt_c_oxase-like_su1_dom"/>
</dbReference>
<dbReference type="InterPro" id="IPR036927">
    <property type="entry name" value="Cyt_c_oxase-like_su1_sf"/>
</dbReference>
<dbReference type="InterPro" id="IPR000883">
    <property type="entry name" value="Cyt_C_Oxase_1"/>
</dbReference>
<dbReference type="InterPro" id="IPR023615">
    <property type="entry name" value="Cyt_c_Oxase_su1_BS"/>
</dbReference>
<dbReference type="InterPro" id="IPR033944">
    <property type="entry name" value="Cyt_c_oxase_su1_dom"/>
</dbReference>
<dbReference type="PANTHER" id="PTHR10422">
    <property type="entry name" value="CYTOCHROME C OXIDASE SUBUNIT 1"/>
    <property type="match status" value="1"/>
</dbReference>
<dbReference type="PANTHER" id="PTHR10422:SF18">
    <property type="entry name" value="CYTOCHROME C OXIDASE SUBUNIT 1"/>
    <property type="match status" value="1"/>
</dbReference>
<dbReference type="Pfam" id="PF00115">
    <property type="entry name" value="COX1"/>
    <property type="match status" value="1"/>
</dbReference>
<dbReference type="PRINTS" id="PR01165">
    <property type="entry name" value="CYCOXIDASEI"/>
</dbReference>
<dbReference type="SUPFAM" id="SSF81442">
    <property type="entry name" value="Cytochrome c oxidase subunit I-like"/>
    <property type="match status" value="1"/>
</dbReference>
<dbReference type="PROSITE" id="PS50855">
    <property type="entry name" value="COX1"/>
    <property type="match status" value="1"/>
</dbReference>
<dbReference type="PROSITE" id="PS00077">
    <property type="entry name" value="COX1_CUB"/>
    <property type="match status" value="1"/>
</dbReference>